<name>DEOB_ESCF3</name>
<organism>
    <name type="scientific">Escherichia fergusonii (strain ATCC 35469 / DSM 13698 / CCUG 18766 / IAM 14443 / JCM 21226 / LMG 7866 / NBRC 102419 / NCTC 12128 / CDC 0568-73)</name>
    <dbReference type="NCBI Taxonomy" id="585054"/>
    <lineage>
        <taxon>Bacteria</taxon>
        <taxon>Pseudomonadati</taxon>
        <taxon>Pseudomonadota</taxon>
        <taxon>Gammaproteobacteria</taxon>
        <taxon>Enterobacterales</taxon>
        <taxon>Enterobacteriaceae</taxon>
        <taxon>Escherichia</taxon>
    </lineage>
</organism>
<feature type="chain" id="PRO_1000133078" description="Phosphopentomutase">
    <location>
        <begin position="1"/>
        <end position="407"/>
    </location>
</feature>
<feature type="binding site" evidence="1">
    <location>
        <position position="10"/>
    </location>
    <ligand>
        <name>Mn(2+)</name>
        <dbReference type="ChEBI" id="CHEBI:29035"/>
        <label>1</label>
    </ligand>
</feature>
<feature type="binding site" evidence="1">
    <location>
        <position position="306"/>
    </location>
    <ligand>
        <name>Mn(2+)</name>
        <dbReference type="ChEBI" id="CHEBI:29035"/>
        <label>2</label>
    </ligand>
</feature>
<feature type="binding site" evidence="1">
    <location>
        <position position="311"/>
    </location>
    <ligand>
        <name>Mn(2+)</name>
        <dbReference type="ChEBI" id="CHEBI:29035"/>
        <label>2</label>
    </ligand>
</feature>
<feature type="binding site" evidence="1">
    <location>
        <position position="347"/>
    </location>
    <ligand>
        <name>Mn(2+)</name>
        <dbReference type="ChEBI" id="CHEBI:29035"/>
        <label>1</label>
    </ligand>
</feature>
<feature type="binding site" evidence="1">
    <location>
        <position position="348"/>
    </location>
    <ligand>
        <name>Mn(2+)</name>
        <dbReference type="ChEBI" id="CHEBI:29035"/>
        <label>1</label>
    </ligand>
</feature>
<feature type="binding site" evidence="1">
    <location>
        <position position="359"/>
    </location>
    <ligand>
        <name>Mn(2+)</name>
        <dbReference type="ChEBI" id="CHEBI:29035"/>
        <label>2</label>
    </ligand>
</feature>
<proteinExistence type="inferred from homology"/>
<gene>
    <name evidence="1" type="primary">deoB</name>
    <name type="ordered locus">EFER_4480</name>
</gene>
<accession>B7LNS3</accession>
<dbReference type="EC" id="5.4.2.7" evidence="1"/>
<dbReference type="EMBL" id="CU928158">
    <property type="protein sequence ID" value="CAQ91893.1"/>
    <property type="molecule type" value="Genomic_DNA"/>
</dbReference>
<dbReference type="RefSeq" id="WP_000816471.1">
    <property type="nucleotide sequence ID" value="NC_011740.1"/>
</dbReference>
<dbReference type="SMR" id="B7LNS3"/>
<dbReference type="GeneID" id="89519362"/>
<dbReference type="KEGG" id="efe:EFER_4480"/>
<dbReference type="HOGENOM" id="CLU_053861_0_0_6"/>
<dbReference type="OrthoDB" id="9769930at2"/>
<dbReference type="UniPathway" id="UPA00002">
    <property type="reaction ID" value="UER00467"/>
</dbReference>
<dbReference type="Proteomes" id="UP000000745">
    <property type="component" value="Chromosome"/>
</dbReference>
<dbReference type="GO" id="GO:0005829">
    <property type="term" value="C:cytosol"/>
    <property type="evidence" value="ECO:0007669"/>
    <property type="project" value="TreeGrafter"/>
</dbReference>
<dbReference type="GO" id="GO:0000287">
    <property type="term" value="F:magnesium ion binding"/>
    <property type="evidence" value="ECO:0007669"/>
    <property type="project" value="InterPro"/>
</dbReference>
<dbReference type="GO" id="GO:0030145">
    <property type="term" value="F:manganese ion binding"/>
    <property type="evidence" value="ECO:0007669"/>
    <property type="project" value="UniProtKB-UniRule"/>
</dbReference>
<dbReference type="GO" id="GO:0008973">
    <property type="term" value="F:phosphopentomutase activity"/>
    <property type="evidence" value="ECO:0007669"/>
    <property type="project" value="UniProtKB-UniRule"/>
</dbReference>
<dbReference type="GO" id="GO:0006018">
    <property type="term" value="P:2-deoxyribose 1-phosphate catabolic process"/>
    <property type="evidence" value="ECO:0007669"/>
    <property type="project" value="UniProtKB-UniRule"/>
</dbReference>
<dbReference type="GO" id="GO:0006015">
    <property type="term" value="P:5-phosphoribose 1-diphosphate biosynthetic process"/>
    <property type="evidence" value="ECO:0007669"/>
    <property type="project" value="UniProtKB-UniPathway"/>
</dbReference>
<dbReference type="GO" id="GO:0043094">
    <property type="term" value="P:metabolic compound salvage"/>
    <property type="evidence" value="ECO:0007669"/>
    <property type="project" value="InterPro"/>
</dbReference>
<dbReference type="GO" id="GO:0009117">
    <property type="term" value="P:nucleotide metabolic process"/>
    <property type="evidence" value="ECO:0007669"/>
    <property type="project" value="InterPro"/>
</dbReference>
<dbReference type="CDD" id="cd16009">
    <property type="entry name" value="PPM"/>
    <property type="match status" value="1"/>
</dbReference>
<dbReference type="FunFam" id="3.30.70.1250:FF:000001">
    <property type="entry name" value="Phosphopentomutase"/>
    <property type="match status" value="1"/>
</dbReference>
<dbReference type="Gene3D" id="3.40.720.10">
    <property type="entry name" value="Alkaline Phosphatase, subunit A"/>
    <property type="match status" value="1"/>
</dbReference>
<dbReference type="Gene3D" id="3.30.70.1250">
    <property type="entry name" value="Phosphopentomutase"/>
    <property type="match status" value="1"/>
</dbReference>
<dbReference type="HAMAP" id="MF_00740">
    <property type="entry name" value="Phosphopentomut"/>
    <property type="match status" value="1"/>
</dbReference>
<dbReference type="InterPro" id="IPR017850">
    <property type="entry name" value="Alkaline_phosphatase_core_sf"/>
</dbReference>
<dbReference type="InterPro" id="IPR010045">
    <property type="entry name" value="DeoB"/>
</dbReference>
<dbReference type="InterPro" id="IPR006124">
    <property type="entry name" value="Metalloenzyme"/>
</dbReference>
<dbReference type="InterPro" id="IPR024052">
    <property type="entry name" value="Phosphopentomutase_DeoB_cap_sf"/>
</dbReference>
<dbReference type="NCBIfam" id="TIGR01696">
    <property type="entry name" value="deoB"/>
    <property type="match status" value="1"/>
</dbReference>
<dbReference type="NCBIfam" id="NF003766">
    <property type="entry name" value="PRK05362.1"/>
    <property type="match status" value="1"/>
</dbReference>
<dbReference type="PANTHER" id="PTHR21110">
    <property type="entry name" value="PHOSPHOPENTOMUTASE"/>
    <property type="match status" value="1"/>
</dbReference>
<dbReference type="PANTHER" id="PTHR21110:SF0">
    <property type="entry name" value="PHOSPHOPENTOMUTASE"/>
    <property type="match status" value="1"/>
</dbReference>
<dbReference type="Pfam" id="PF01676">
    <property type="entry name" value="Metalloenzyme"/>
    <property type="match status" value="1"/>
</dbReference>
<dbReference type="PIRSF" id="PIRSF001491">
    <property type="entry name" value="Ppentomutase"/>
    <property type="match status" value="1"/>
</dbReference>
<dbReference type="SUPFAM" id="SSF53649">
    <property type="entry name" value="Alkaline phosphatase-like"/>
    <property type="match status" value="1"/>
</dbReference>
<dbReference type="SUPFAM" id="SSF143856">
    <property type="entry name" value="DeoB insert domain-like"/>
    <property type="match status" value="1"/>
</dbReference>
<keyword id="KW-0963">Cytoplasm</keyword>
<keyword id="KW-0413">Isomerase</keyword>
<keyword id="KW-0464">Manganese</keyword>
<keyword id="KW-0479">Metal-binding</keyword>
<protein>
    <recommendedName>
        <fullName evidence="1">Phosphopentomutase</fullName>
        <ecNumber evidence="1">5.4.2.7</ecNumber>
    </recommendedName>
    <alternativeName>
        <fullName evidence="1">Phosphodeoxyribomutase</fullName>
    </alternativeName>
</protein>
<evidence type="ECO:0000255" key="1">
    <source>
        <dbReference type="HAMAP-Rule" id="MF_00740"/>
    </source>
</evidence>
<reference key="1">
    <citation type="journal article" date="2009" name="PLoS Genet.">
        <title>Organised genome dynamics in the Escherichia coli species results in highly diverse adaptive paths.</title>
        <authorList>
            <person name="Touchon M."/>
            <person name="Hoede C."/>
            <person name="Tenaillon O."/>
            <person name="Barbe V."/>
            <person name="Baeriswyl S."/>
            <person name="Bidet P."/>
            <person name="Bingen E."/>
            <person name="Bonacorsi S."/>
            <person name="Bouchier C."/>
            <person name="Bouvet O."/>
            <person name="Calteau A."/>
            <person name="Chiapello H."/>
            <person name="Clermont O."/>
            <person name="Cruveiller S."/>
            <person name="Danchin A."/>
            <person name="Diard M."/>
            <person name="Dossat C."/>
            <person name="Karoui M.E."/>
            <person name="Frapy E."/>
            <person name="Garry L."/>
            <person name="Ghigo J.M."/>
            <person name="Gilles A.M."/>
            <person name="Johnson J."/>
            <person name="Le Bouguenec C."/>
            <person name="Lescat M."/>
            <person name="Mangenot S."/>
            <person name="Martinez-Jehanne V."/>
            <person name="Matic I."/>
            <person name="Nassif X."/>
            <person name="Oztas S."/>
            <person name="Petit M.A."/>
            <person name="Pichon C."/>
            <person name="Rouy Z."/>
            <person name="Ruf C.S."/>
            <person name="Schneider D."/>
            <person name="Tourret J."/>
            <person name="Vacherie B."/>
            <person name="Vallenet D."/>
            <person name="Medigue C."/>
            <person name="Rocha E.P.C."/>
            <person name="Denamur E."/>
        </authorList>
    </citation>
    <scope>NUCLEOTIDE SEQUENCE [LARGE SCALE GENOMIC DNA]</scope>
    <source>
        <strain>ATCC 35469 / DSM 13698 / BCRC 15582 / CCUG 18766 / IAM 14443 / JCM 21226 / LMG 7866 / NBRC 102419 / NCTC 12128 / CDC 0568-73</strain>
    </source>
</reference>
<sequence>MKRAFIMVLDSFGIGATEDAERFGDVGADTLGHIAEACAKGEADNGRKGPLNLPNLTRLGLAKAHEGSTGFIPAGMDGNAEVIGAYAWAHEMSSGKDTPSGHWEIAGVPVLFEWGYFSDHENSFPQELLDKLVERANLPGYLGNCHSSGTVILDQLGEEHMKTGKPIFYTSADSVFQIACHEETFGLDKLYELCEIAREELTNGGYNIGRVIARPFIGDKAGNFQRTGNRHDLAVEPPAPTVLQKLVDEKHGQVVSVGKIADIYANCGITKKVKATGLDALFDATIKEMKEAGDNTIVFTNFVDFDSSWGHRRDVAGYAAGLELFDRRLPELMSLLRDDDILILTADHGCDPTWTGTDHTREHIPVLVYGPKVKPGSLGHRETFADIGQTLAKYFGTSDMEYGKAMF</sequence>
<comment type="function">
    <text evidence="1">Isomerase that catalyzes the conversion of deoxy-ribose 1-phosphate (dRib-1-P) and ribose 1-phosphate (Rib-1-P) to deoxy-ribose 5-phosphate (dRib-5-P) and ribose 5-phosphate (Rib-5-P), respectively.</text>
</comment>
<comment type="catalytic activity">
    <reaction evidence="1">
        <text>2-deoxy-alpha-D-ribose 1-phosphate = 2-deoxy-D-ribose 5-phosphate</text>
        <dbReference type="Rhea" id="RHEA:27658"/>
        <dbReference type="ChEBI" id="CHEBI:57259"/>
        <dbReference type="ChEBI" id="CHEBI:62877"/>
        <dbReference type="EC" id="5.4.2.7"/>
    </reaction>
</comment>
<comment type="catalytic activity">
    <reaction evidence="1">
        <text>alpha-D-ribose 1-phosphate = D-ribose 5-phosphate</text>
        <dbReference type="Rhea" id="RHEA:18793"/>
        <dbReference type="ChEBI" id="CHEBI:57720"/>
        <dbReference type="ChEBI" id="CHEBI:78346"/>
        <dbReference type="EC" id="5.4.2.7"/>
    </reaction>
</comment>
<comment type="cofactor">
    <cofactor evidence="1">
        <name>Mn(2+)</name>
        <dbReference type="ChEBI" id="CHEBI:29035"/>
    </cofactor>
    <text evidence="1">Binds 2 manganese ions.</text>
</comment>
<comment type="pathway">
    <text evidence="1">Carbohydrate degradation; 2-deoxy-D-ribose 1-phosphate degradation; D-glyceraldehyde 3-phosphate and acetaldehyde from 2-deoxy-alpha-D-ribose 1-phosphate: step 1/2.</text>
</comment>
<comment type="subcellular location">
    <subcellularLocation>
        <location evidence="1">Cytoplasm</location>
    </subcellularLocation>
</comment>
<comment type="similarity">
    <text evidence="1">Belongs to the phosphopentomutase family.</text>
</comment>